<name>NUOB_AZOVD</name>
<reference key="1">
    <citation type="journal article" date="2009" name="J. Bacteriol.">
        <title>Genome sequence of Azotobacter vinelandii, an obligate aerobe specialized to support diverse anaerobic metabolic processes.</title>
        <authorList>
            <person name="Setubal J.C."/>
            <person name="Dos Santos P."/>
            <person name="Goldman B.S."/>
            <person name="Ertesvaag H."/>
            <person name="Espin G."/>
            <person name="Rubio L.M."/>
            <person name="Valla S."/>
            <person name="Almeida N.F."/>
            <person name="Balasubramanian D."/>
            <person name="Cromes L."/>
            <person name="Curatti L."/>
            <person name="Du Z."/>
            <person name="Godsy E."/>
            <person name="Goodner B."/>
            <person name="Hellner-Burris K."/>
            <person name="Hernandez J.A."/>
            <person name="Houmiel K."/>
            <person name="Imperial J."/>
            <person name="Kennedy C."/>
            <person name="Larson T.J."/>
            <person name="Latreille P."/>
            <person name="Ligon L.S."/>
            <person name="Lu J."/>
            <person name="Maerk M."/>
            <person name="Miller N.M."/>
            <person name="Norton S."/>
            <person name="O'Carroll I.P."/>
            <person name="Paulsen I."/>
            <person name="Raulfs E.C."/>
            <person name="Roemer R."/>
            <person name="Rosser J."/>
            <person name="Segura D."/>
            <person name="Slater S."/>
            <person name="Stricklin S.L."/>
            <person name="Studholme D.J."/>
            <person name="Sun J."/>
            <person name="Viana C.J."/>
            <person name="Wallin E."/>
            <person name="Wang B."/>
            <person name="Wheeler C."/>
            <person name="Zhu H."/>
            <person name="Dean D.R."/>
            <person name="Dixon R."/>
            <person name="Wood D."/>
        </authorList>
    </citation>
    <scope>NUCLEOTIDE SEQUENCE [LARGE SCALE GENOMIC DNA]</scope>
    <source>
        <strain>DJ / ATCC BAA-1303</strain>
    </source>
</reference>
<protein>
    <recommendedName>
        <fullName evidence="1">NADH-quinone oxidoreductase subunit B</fullName>
        <ecNumber evidence="1">7.1.1.-</ecNumber>
    </recommendedName>
    <alternativeName>
        <fullName evidence="1">NADH dehydrogenase I subunit B</fullName>
    </alternativeName>
    <alternativeName>
        <fullName evidence="1">NDH-1 subunit B</fullName>
    </alternativeName>
</protein>
<accession>C1DL15</accession>
<sequence>MQYKLTRIDPDASYEQYPIGERETVTDPSEGQVHRNIFMGKLEDVLSGAVNWGRKNSLWPYNFGLSCCYVEMTTAFTAPHDIARFGAEVIRASPRQADFMVIAGTCFIKMAPIIQRLYEQMLEPKWVISMGSCANSGGMYDIYSVVQGVDKFLPIDVYIPGCPPRPEAFLQGLMLLQESIGQERRPLSWVVGDQGIYRAEMPSQRELRREQRIQVTNLRSPDEV</sequence>
<keyword id="KW-0004">4Fe-4S</keyword>
<keyword id="KW-0997">Cell inner membrane</keyword>
<keyword id="KW-1003">Cell membrane</keyword>
<keyword id="KW-0408">Iron</keyword>
<keyword id="KW-0411">Iron-sulfur</keyword>
<keyword id="KW-0472">Membrane</keyword>
<keyword id="KW-0479">Metal-binding</keyword>
<keyword id="KW-0520">NAD</keyword>
<keyword id="KW-0874">Quinone</keyword>
<keyword id="KW-1278">Translocase</keyword>
<keyword id="KW-0813">Transport</keyword>
<keyword id="KW-0830">Ubiquinone</keyword>
<gene>
    <name evidence="1" type="primary">nuoB</name>
    <name type="ordered locus">Avin_28450</name>
</gene>
<feature type="chain" id="PRO_1000214854" description="NADH-quinone oxidoreductase subunit B">
    <location>
        <begin position="1"/>
        <end position="224"/>
    </location>
</feature>
<feature type="binding site" evidence="1">
    <location>
        <position position="67"/>
    </location>
    <ligand>
        <name>[4Fe-4S] cluster</name>
        <dbReference type="ChEBI" id="CHEBI:49883"/>
    </ligand>
</feature>
<feature type="binding site" evidence="1">
    <location>
        <position position="68"/>
    </location>
    <ligand>
        <name>[4Fe-4S] cluster</name>
        <dbReference type="ChEBI" id="CHEBI:49883"/>
    </ligand>
</feature>
<feature type="binding site" evidence="1">
    <location>
        <position position="133"/>
    </location>
    <ligand>
        <name>[4Fe-4S] cluster</name>
        <dbReference type="ChEBI" id="CHEBI:49883"/>
    </ligand>
</feature>
<feature type="binding site" evidence="1">
    <location>
        <position position="162"/>
    </location>
    <ligand>
        <name>[4Fe-4S] cluster</name>
        <dbReference type="ChEBI" id="CHEBI:49883"/>
    </ligand>
</feature>
<dbReference type="EC" id="7.1.1.-" evidence="1"/>
<dbReference type="EMBL" id="CP001157">
    <property type="protein sequence ID" value="ACO79017.1"/>
    <property type="molecule type" value="Genomic_DNA"/>
</dbReference>
<dbReference type="RefSeq" id="WP_012701404.1">
    <property type="nucleotide sequence ID" value="NC_012560.1"/>
</dbReference>
<dbReference type="SMR" id="C1DL15"/>
<dbReference type="STRING" id="322710.Avin_28450"/>
<dbReference type="EnsemblBacteria" id="ACO79017">
    <property type="protein sequence ID" value="ACO79017"/>
    <property type="gene ID" value="Avin_28450"/>
</dbReference>
<dbReference type="GeneID" id="88185960"/>
<dbReference type="KEGG" id="avn:Avin_28450"/>
<dbReference type="eggNOG" id="COG0377">
    <property type="taxonomic scope" value="Bacteria"/>
</dbReference>
<dbReference type="HOGENOM" id="CLU_055737_7_3_6"/>
<dbReference type="OrthoDB" id="9786737at2"/>
<dbReference type="Proteomes" id="UP000002424">
    <property type="component" value="Chromosome"/>
</dbReference>
<dbReference type="GO" id="GO:0005886">
    <property type="term" value="C:plasma membrane"/>
    <property type="evidence" value="ECO:0007669"/>
    <property type="project" value="UniProtKB-SubCell"/>
</dbReference>
<dbReference type="GO" id="GO:0045271">
    <property type="term" value="C:respiratory chain complex I"/>
    <property type="evidence" value="ECO:0007669"/>
    <property type="project" value="TreeGrafter"/>
</dbReference>
<dbReference type="GO" id="GO:0051539">
    <property type="term" value="F:4 iron, 4 sulfur cluster binding"/>
    <property type="evidence" value="ECO:0007669"/>
    <property type="project" value="UniProtKB-KW"/>
</dbReference>
<dbReference type="GO" id="GO:0005506">
    <property type="term" value="F:iron ion binding"/>
    <property type="evidence" value="ECO:0007669"/>
    <property type="project" value="UniProtKB-UniRule"/>
</dbReference>
<dbReference type="GO" id="GO:0008137">
    <property type="term" value="F:NADH dehydrogenase (ubiquinone) activity"/>
    <property type="evidence" value="ECO:0007669"/>
    <property type="project" value="InterPro"/>
</dbReference>
<dbReference type="GO" id="GO:0050136">
    <property type="term" value="F:NADH:ubiquinone reductase (non-electrogenic) activity"/>
    <property type="evidence" value="ECO:0007669"/>
    <property type="project" value="UniProtKB-UniRule"/>
</dbReference>
<dbReference type="GO" id="GO:0048038">
    <property type="term" value="F:quinone binding"/>
    <property type="evidence" value="ECO:0007669"/>
    <property type="project" value="UniProtKB-KW"/>
</dbReference>
<dbReference type="GO" id="GO:0009060">
    <property type="term" value="P:aerobic respiration"/>
    <property type="evidence" value="ECO:0007669"/>
    <property type="project" value="TreeGrafter"/>
</dbReference>
<dbReference type="GO" id="GO:0015990">
    <property type="term" value="P:electron transport coupled proton transport"/>
    <property type="evidence" value="ECO:0007669"/>
    <property type="project" value="TreeGrafter"/>
</dbReference>
<dbReference type="FunFam" id="3.40.50.12280:FF:000002">
    <property type="entry name" value="NADH-quinone oxidoreductase subunit B"/>
    <property type="match status" value="1"/>
</dbReference>
<dbReference type="Gene3D" id="3.40.50.12280">
    <property type="match status" value="1"/>
</dbReference>
<dbReference type="HAMAP" id="MF_01356">
    <property type="entry name" value="NDH1_NuoB"/>
    <property type="match status" value="1"/>
</dbReference>
<dbReference type="InterPro" id="IPR006137">
    <property type="entry name" value="NADH_UbQ_OxRdtase-like_20kDa"/>
</dbReference>
<dbReference type="InterPro" id="IPR006138">
    <property type="entry name" value="NADH_UQ_OxRdtase_20Kd_su"/>
</dbReference>
<dbReference type="NCBIfam" id="TIGR01957">
    <property type="entry name" value="nuoB_fam"/>
    <property type="match status" value="1"/>
</dbReference>
<dbReference type="NCBIfam" id="NF005012">
    <property type="entry name" value="PRK06411.1"/>
    <property type="match status" value="1"/>
</dbReference>
<dbReference type="PANTHER" id="PTHR11995">
    <property type="entry name" value="NADH DEHYDROGENASE"/>
    <property type="match status" value="1"/>
</dbReference>
<dbReference type="PANTHER" id="PTHR11995:SF14">
    <property type="entry name" value="NADH DEHYDROGENASE [UBIQUINONE] IRON-SULFUR PROTEIN 7, MITOCHONDRIAL"/>
    <property type="match status" value="1"/>
</dbReference>
<dbReference type="Pfam" id="PF01058">
    <property type="entry name" value="Oxidored_q6"/>
    <property type="match status" value="1"/>
</dbReference>
<dbReference type="SUPFAM" id="SSF56770">
    <property type="entry name" value="HydA/Nqo6-like"/>
    <property type="match status" value="1"/>
</dbReference>
<dbReference type="PROSITE" id="PS01150">
    <property type="entry name" value="COMPLEX1_20K"/>
    <property type="match status" value="1"/>
</dbReference>
<evidence type="ECO:0000255" key="1">
    <source>
        <dbReference type="HAMAP-Rule" id="MF_01356"/>
    </source>
</evidence>
<comment type="function">
    <text evidence="1">NDH-1 shuttles electrons from NADH, via FMN and iron-sulfur (Fe-S) centers, to quinones in the respiratory chain. The immediate electron acceptor for the enzyme in this species is believed to be ubiquinone. Couples the redox reaction to proton translocation (for every two electrons transferred, four hydrogen ions are translocated across the cytoplasmic membrane), and thus conserves the redox energy in a proton gradient.</text>
</comment>
<comment type="catalytic activity">
    <reaction evidence="1">
        <text>a quinone + NADH + 5 H(+)(in) = a quinol + NAD(+) + 4 H(+)(out)</text>
        <dbReference type="Rhea" id="RHEA:57888"/>
        <dbReference type="ChEBI" id="CHEBI:15378"/>
        <dbReference type="ChEBI" id="CHEBI:24646"/>
        <dbReference type="ChEBI" id="CHEBI:57540"/>
        <dbReference type="ChEBI" id="CHEBI:57945"/>
        <dbReference type="ChEBI" id="CHEBI:132124"/>
    </reaction>
</comment>
<comment type="cofactor">
    <cofactor evidence="1">
        <name>[4Fe-4S] cluster</name>
        <dbReference type="ChEBI" id="CHEBI:49883"/>
    </cofactor>
    <text evidence="1">Binds 1 [4Fe-4S] cluster.</text>
</comment>
<comment type="subunit">
    <text evidence="1">NDH-1 is composed of 13 different subunits. Subunits NuoB, CD, E, F, and G constitute the peripheral sector of the complex.</text>
</comment>
<comment type="subcellular location">
    <subcellularLocation>
        <location evidence="1">Cell inner membrane</location>
        <topology evidence="1">Peripheral membrane protein</topology>
        <orientation evidence="1">Cytoplasmic side</orientation>
    </subcellularLocation>
</comment>
<comment type="similarity">
    <text evidence="1">Belongs to the complex I 20 kDa subunit family.</text>
</comment>
<organism>
    <name type="scientific">Azotobacter vinelandii (strain DJ / ATCC BAA-1303)</name>
    <dbReference type="NCBI Taxonomy" id="322710"/>
    <lineage>
        <taxon>Bacteria</taxon>
        <taxon>Pseudomonadati</taxon>
        <taxon>Pseudomonadota</taxon>
        <taxon>Gammaproteobacteria</taxon>
        <taxon>Pseudomonadales</taxon>
        <taxon>Pseudomonadaceae</taxon>
        <taxon>Azotobacter</taxon>
    </lineage>
</organism>
<proteinExistence type="inferred from homology"/>